<dbReference type="EMBL" id="AE000513">
    <property type="protein sequence ID" value="AAF11664.1"/>
    <property type="molecule type" value="Genomic_DNA"/>
</dbReference>
<dbReference type="PIR" id="F75314">
    <property type="entry name" value="F75314"/>
</dbReference>
<dbReference type="RefSeq" id="NP_295838.1">
    <property type="nucleotide sequence ID" value="NC_001263.1"/>
</dbReference>
<dbReference type="RefSeq" id="WP_010888746.1">
    <property type="nucleotide sequence ID" value="NC_001263.1"/>
</dbReference>
<dbReference type="PDB" id="1NKW">
    <property type="method" value="X-ray"/>
    <property type="resolution" value="3.10 A"/>
    <property type="chains" value="J=1-156"/>
</dbReference>
<dbReference type="PDB" id="1NWX">
    <property type="method" value="X-ray"/>
    <property type="resolution" value="3.50 A"/>
    <property type="chains" value="J=1-156"/>
</dbReference>
<dbReference type="PDB" id="1NWY">
    <property type="method" value="X-ray"/>
    <property type="resolution" value="3.30 A"/>
    <property type="chains" value="J=1-156"/>
</dbReference>
<dbReference type="PDB" id="1SM1">
    <property type="method" value="X-ray"/>
    <property type="resolution" value="3.42 A"/>
    <property type="chains" value="J=1-156"/>
</dbReference>
<dbReference type="PDB" id="1XBP">
    <property type="method" value="X-ray"/>
    <property type="resolution" value="3.50 A"/>
    <property type="chains" value="J=1-156"/>
</dbReference>
<dbReference type="PDB" id="2ZJP">
    <property type="method" value="X-ray"/>
    <property type="resolution" value="3.70 A"/>
    <property type="chains" value="I=1-156"/>
</dbReference>
<dbReference type="PDB" id="2ZJQ">
    <property type="method" value="X-ray"/>
    <property type="resolution" value="3.30 A"/>
    <property type="chains" value="I=1-156"/>
</dbReference>
<dbReference type="PDB" id="2ZJR">
    <property type="method" value="X-ray"/>
    <property type="resolution" value="2.91 A"/>
    <property type="chains" value="I=1-156"/>
</dbReference>
<dbReference type="PDB" id="3CF5">
    <property type="method" value="X-ray"/>
    <property type="resolution" value="3.30 A"/>
    <property type="chains" value="I=1-156"/>
</dbReference>
<dbReference type="PDB" id="3DLL">
    <property type="method" value="X-ray"/>
    <property type="resolution" value="3.50 A"/>
    <property type="chains" value="I=1-156"/>
</dbReference>
<dbReference type="PDB" id="3PIO">
    <property type="method" value="X-ray"/>
    <property type="resolution" value="3.25 A"/>
    <property type="chains" value="I=1-156"/>
</dbReference>
<dbReference type="PDB" id="3PIP">
    <property type="method" value="X-ray"/>
    <property type="resolution" value="3.45 A"/>
    <property type="chains" value="I=1-156"/>
</dbReference>
<dbReference type="PDB" id="4IO9">
    <property type="method" value="X-ray"/>
    <property type="resolution" value="3.20 A"/>
    <property type="chains" value="I=1-156"/>
</dbReference>
<dbReference type="PDB" id="4IOA">
    <property type="method" value="X-ray"/>
    <property type="resolution" value="3.20 A"/>
    <property type="chains" value="I=1-156"/>
</dbReference>
<dbReference type="PDB" id="4IOC">
    <property type="method" value="X-ray"/>
    <property type="resolution" value="3.60 A"/>
    <property type="chains" value="I=1-156"/>
</dbReference>
<dbReference type="PDB" id="4U67">
    <property type="method" value="X-ray"/>
    <property type="resolution" value="3.65 A"/>
    <property type="chains" value="I=1-156"/>
</dbReference>
<dbReference type="PDB" id="4V49">
    <property type="method" value="X-ray"/>
    <property type="resolution" value="8.70 A"/>
    <property type="chains" value="J=4-144"/>
</dbReference>
<dbReference type="PDB" id="4V4A">
    <property type="method" value="X-ray"/>
    <property type="resolution" value="9.50 A"/>
    <property type="chains" value="J=4-144"/>
</dbReference>
<dbReference type="PDB" id="4V4G">
    <property type="method" value="X-ray"/>
    <property type="resolution" value="11.50 A"/>
    <property type="chains" value="M=4-144"/>
</dbReference>
<dbReference type="PDB" id="4WFN">
    <property type="method" value="X-ray"/>
    <property type="resolution" value="3.54 A"/>
    <property type="chains" value="I=1-156"/>
</dbReference>
<dbReference type="PDB" id="5DM6">
    <property type="method" value="X-ray"/>
    <property type="resolution" value="2.90 A"/>
    <property type="chains" value="I=4-144"/>
</dbReference>
<dbReference type="PDB" id="5DM7">
    <property type="method" value="X-ray"/>
    <property type="resolution" value="3.00 A"/>
    <property type="chains" value="I=4-144"/>
</dbReference>
<dbReference type="PDB" id="5JVG">
    <property type="method" value="X-ray"/>
    <property type="resolution" value="3.43 A"/>
    <property type="chains" value="I=1-156"/>
</dbReference>
<dbReference type="PDB" id="5JVH">
    <property type="method" value="X-ray"/>
    <property type="resolution" value="3.58 A"/>
    <property type="chains" value="I=1-156"/>
</dbReference>
<dbReference type="PDB" id="7A0R">
    <property type="method" value="X-ray"/>
    <property type="resolution" value="3.30 A"/>
    <property type="chains" value="I=1-137"/>
</dbReference>
<dbReference type="PDB" id="7A0S">
    <property type="method" value="X-ray"/>
    <property type="resolution" value="3.22 A"/>
    <property type="chains" value="I=1-137"/>
</dbReference>
<dbReference type="PDB" id="7A18">
    <property type="method" value="X-ray"/>
    <property type="resolution" value="3.40 A"/>
    <property type="chains" value="I=1-137"/>
</dbReference>
<dbReference type="PDBsum" id="1NKW"/>
<dbReference type="PDBsum" id="1NWX"/>
<dbReference type="PDBsum" id="1NWY"/>
<dbReference type="PDBsum" id="1SM1"/>
<dbReference type="PDBsum" id="1XBP"/>
<dbReference type="PDBsum" id="2ZJP"/>
<dbReference type="PDBsum" id="2ZJQ"/>
<dbReference type="PDBsum" id="2ZJR"/>
<dbReference type="PDBsum" id="3CF5"/>
<dbReference type="PDBsum" id="3DLL"/>
<dbReference type="PDBsum" id="3PIO"/>
<dbReference type="PDBsum" id="3PIP"/>
<dbReference type="PDBsum" id="4IO9"/>
<dbReference type="PDBsum" id="4IOA"/>
<dbReference type="PDBsum" id="4IOC"/>
<dbReference type="PDBsum" id="4U67"/>
<dbReference type="PDBsum" id="4V49"/>
<dbReference type="PDBsum" id="4V4A"/>
<dbReference type="PDBsum" id="4V4G"/>
<dbReference type="PDBsum" id="4WFN"/>
<dbReference type="PDBsum" id="5DM6"/>
<dbReference type="PDBsum" id="5DM7"/>
<dbReference type="PDBsum" id="5JVG"/>
<dbReference type="PDBsum" id="5JVH"/>
<dbReference type="PDBsum" id="7A0R"/>
<dbReference type="PDBsum" id="7A0S"/>
<dbReference type="PDBsum" id="7A18"/>
<dbReference type="SMR" id="Q9RSK9"/>
<dbReference type="FunCoup" id="Q9RSK9">
    <property type="interactions" value="489"/>
</dbReference>
<dbReference type="IntAct" id="Q9RSK9">
    <property type="interactions" value="1"/>
</dbReference>
<dbReference type="STRING" id="243230.DR_2115"/>
<dbReference type="PaxDb" id="243230-DR_2115"/>
<dbReference type="EnsemblBacteria" id="AAF11664">
    <property type="protein sequence ID" value="AAF11664"/>
    <property type="gene ID" value="DR_2115"/>
</dbReference>
<dbReference type="GeneID" id="69518357"/>
<dbReference type="KEGG" id="dra:DR_2115"/>
<dbReference type="PATRIC" id="fig|243230.17.peg.2338"/>
<dbReference type="eggNOG" id="COG0200">
    <property type="taxonomic scope" value="Bacteria"/>
</dbReference>
<dbReference type="HOGENOM" id="CLU_055188_4_0_0"/>
<dbReference type="InParanoid" id="Q9RSK9"/>
<dbReference type="OrthoDB" id="9810293at2"/>
<dbReference type="EvolutionaryTrace" id="Q9RSK9"/>
<dbReference type="Proteomes" id="UP000002524">
    <property type="component" value="Chromosome 1"/>
</dbReference>
<dbReference type="GO" id="GO:0022625">
    <property type="term" value="C:cytosolic large ribosomal subunit"/>
    <property type="evidence" value="ECO:0000318"/>
    <property type="project" value="GO_Central"/>
</dbReference>
<dbReference type="GO" id="GO:0019843">
    <property type="term" value="F:rRNA binding"/>
    <property type="evidence" value="ECO:0007669"/>
    <property type="project" value="UniProtKB-UniRule"/>
</dbReference>
<dbReference type="GO" id="GO:0003735">
    <property type="term" value="F:structural constituent of ribosome"/>
    <property type="evidence" value="ECO:0000318"/>
    <property type="project" value="GO_Central"/>
</dbReference>
<dbReference type="GO" id="GO:0006412">
    <property type="term" value="P:translation"/>
    <property type="evidence" value="ECO:0007669"/>
    <property type="project" value="UniProtKB-UniRule"/>
</dbReference>
<dbReference type="Gene3D" id="3.100.10.10">
    <property type="match status" value="1"/>
</dbReference>
<dbReference type="HAMAP" id="MF_01341">
    <property type="entry name" value="Ribosomal_uL15"/>
    <property type="match status" value="1"/>
</dbReference>
<dbReference type="InterPro" id="IPR030878">
    <property type="entry name" value="Ribosomal_uL15"/>
</dbReference>
<dbReference type="InterPro" id="IPR021131">
    <property type="entry name" value="Ribosomal_uL15/eL18"/>
</dbReference>
<dbReference type="InterPro" id="IPR036227">
    <property type="entry name" value="Ribosomal_uL15/eL18_sf"/>
</dbReference>
<dbReference type="InterPro" id="IPR005749">
    <property type="entry name" value="Ribosomal_uL15_bac-type"/>
</dbReference>
<dbReference type="InterPro" id="IPR001196">
    <property type="entry name" value="Ribosomal_uL15_CS"/>
</dbReference>
<dbReference type="NCBIfam" id="TIGR01071">
    <property type="entry name" value="rplO_bact"/>
    <property type="match status" value="1"/>
</dbReference>
<dbReference type="PANTHER" id="PTHR12934">
    <property type="entry name" value="50S RIBOSOMAL PROTEIN L15"/>
    <property type="match status" value="1"/>
</dbReference>
<dbReference type="PANTHER" id="PTHR12934:SF11">
    <property type="entry name" value="LARGE RIBOSOMAL SUBUNIT PROTEIN UL15M"/>
    <property type="match status" value="1"/>
</dbReference>
<dbReference type="Pfam" id="PF00828">
    <property type="entry name" value="Ribosomal_L27A"/>
    <property type="match status" value="1"/>
</dbReference>
<dbReference type="SUPFAM" id="SSF52080">
    <property type="entry name" value="Ribosomal proteins L15p and L18e"/>
    <property type="match status" value="1"/>
</dbReference>
<dbReference type="PROSITE" id="PS00475">
    <property type="entry name" value="RIBOSOMAL_L15"/>
    <property type="match status" value="1"/>
</dbReference>
<comment type="function">
    <text>Binds to the 23S rRNA.</text>
</comment>
<comment type="subunit">
    <text evidence="2 3 4 5 6 7">Part of the 50S ribosomal subunit. Contacts proteins L4, L21 and L35.</text>
</comment>
<comment type="similarity">
    <text evidence="8">Belongs to the universal ribosomal protein uL15 family.</text>
</comment>
<evidence type="ECO:0000256" key="1">
    <source>
        <dbReference type="SAM" id="MobiDB-lite"/>
    </source>
</evidence>
<evidence type="ECO:0000269" key="2">
    <source>
    </source>
</evidence>
<evidence type="ECO:0000269" key="3">
    <source>
    </source>
</evidence>
<evidence type="ECO:0000269" key="4">
    <source>
    </source>
</evidence>
<evidence type="ECO:0000269" key="5">
    <source>
    </source>
</evidence>
<evidence type="ECO:0000269" key="6">
    <source>
    </source>
</evidence>
<evidence type="ECO:0000269" key="7">
    <source>
    </source>
</evidence>
<evidence type="ECO:0000305" key="8"/>
<evidence type="ECO:0007829" key="9">
    <source>
        <dbReference type="PDB" id="2ZJR"/>
    </source>
</evidence>
<evidence type="ECO:0007829" key="10">
    <source>
        <dbReference type="PDB" id="4IO9"/>
    </source>
</evidence>
<evidence type="ECO:0007829" key="11">
    <source>
        <dbReference type="PDB" id="4IOA"/>
    </source>
</evidence>
<evidence type="ECO:0007829" key="12">
    <source>
        <dbReference type="PDB" id="5DM6"/>
    </source>
</evidence>
<evidence type="ECO:0007829" key="13">
    <source>
        <dbReference type="PDB" id="5DM7"/>
    </source>
</evidence>
<evidence type="ECO:0007829" key="14">
    <source>
        <dbReference type="PDB" id="7A0R"/>
    </source>
</evidence>
<evidence type="ECO:0007829" key="15">
    <source>
        <dbReference type="PDB" id="7A0S"/>
    </source>
</evidence>
<protein>
    <recommendedName>
        <fullName evidence="8">Large ribosomal subunit protein uL15</fullName>
    </recommendedName>
    <alternativeName>
        <fullName>50S ribosomal protein L15</fullName>
    </alternativeName>
</protein>
<sequence>MKLHDLKPTPGSRKDRKRVGRGPGGTDKTAGRGHKGQKSRSGAGKGAFFEGGRSRLIARLPKRGFNNVGTTYEVVKLSQLQDLEDTTFDRDTLEAYRLVRRKNRPVKLLASGEISRAVTVHVDAASAAAIKAVEAAGGRVVLPEVQTQQDDAQKAE</sequence>
<gene>
    <name type="primary">rplO</name>
    <name type="ordered locus">DR_2115</name>
</gene>
<accession>Q9RSK9</accession>
<organism>
    <name type="scientific">Deinococcus radiodurans (strain ATCC 13939 / DSM 20539 / JCM 16871 / CCUG 27074 / LMG 4051 / NBRC 15346 / NCIMB 9279 / VKM B-1422 / R1)</name>
    <dbReference type="NCBI Taxonomy" id="243230"/>
    <lineage>
        <taxon>Bacteria</taxon>
        <taxon>Thermotogati</taxon>
        <taxon>Deinococcota</taxon>
        <taxon>Deinococci</taxon>
        <taxon>Deinococcales</taxon>
        <taxon>Deinococcaceae</taxon>
        <taxon>Deinococcus</taxon>
    </lineage>
</organism>
<name>RL15_DEIRA</name>
<keyword id="KW-0002">3D-structure</keyword>
<keyword id="KW-0903">Direct protein sequencing</keyword>
<keyword id="KW-1185">Reference proteome</keyword>
<keyword id="KW-0687">Ribonucleoprotein</keyword>
<keyword id="KW-0689">Ribosomal protein</keyword>
<keyword id="KW-0694">RNA-binding</keyword>
<keyword id="KW-0699">rRNA-binding</keyword>
<feature type="chain" id="PRO_0000104716" description="Large ribosomal subunit protein uL15">
    <location>
        <begin position="1"/>
        <end position="156"/>
    </location>
</feature>
<feature type="region of interest" description="Disordered" evidence="1">
    <location>
        <begin position="1"/>
        <end position="48"/>
    </location>
</feature>
<feature type="strand" evidence="15">
    <location>
        <begin position="3"/>
        <end position="5"/>
    </location>
</feature>
<feature type="turn" evidence="9">
    <location>
        <begin position="12"/>
        <end position="14"/>
    </location>
</feature>
<feature type="strand" evidence="9">
    <location>
        <begin position="19"/>
        <end position="21"/>
    </location>
</feature>
<feature type="strand" evidence="12">
    <location>
        <begin position="23"/>
        <end position="26"/>
    </location>
</feature>
<feature type="strand" evidence="9">
    <location>
        <begin position="30"/>
        <end position="32"/>
    </location>
</feature>
<feature type="strand" evidence="12">
    <location>
        <begin position="34"/>
        <end position="36"/>
    </location>
</feature>
<feature type="turn" evidence="12">
    <location>
        <begin position="37"/>
        <end position="39"/>
    </location>
</feature>
<feature type="strand" evidence="10">
    <location>
        <begin position="44"/>
        <end position="46"/>
    </location>
</feature>
<feature type="strand" evidence="12">
    <location>
        <begin position="51"/>
        <end position="53"/>
    </location>
</feature>
<feature type="helix" evidence="12">
    <location>
        <begin position="56"/>
        <end position="59"/>
    </location>
</feature>
<feature type="strand" evidence="15">
    <location>
        <begin position="66"/>
        <end position="69"/>
    </location>
</feature>
<feature type="strand" evidence="12">
    <location>
        <begin position="73"/>
        <end position="76"/>
    </location>
</feature>
<feature type="helix" evidence="12">
    <location>
        <begin position="77"/>
        <end position="80"/>
    </location>
</feature>
<feature type="turn" evidence="12">
    <location>
        <begin position="82"/>
        <end position="84"/>
    </location>
</feature>
<feature type="strand" evidence="14">
    <location>
        <begin position="85"/>
        <end position="89"/>
    </location>
</feature>
<feature type="helix" evidence="12">
    <location>
        <begin position="92"/>
        <end position="97"/>
    </location>
</feature>
<feature type="strand" evidence="13">
    <location>
        <begin position="102"/>
        <end position="104"/>
    </location>
</feature>
<feature type="strand" evidence="12">
    <location>
        <begin position="106"/>
        <end position="109"/>
    </location>
</feature>
<feature type="strand" evidence="11">
    <location>
        <begin position="118"/>
        <end position="120"/>
    </location>
</feature>
<feature type="strand" evidence="12">
    <location>
        <begin position="123"/>
        <end position="125"/>
    </location>
</feature>
<feature type="helix" evidence="12">
    <location>
        <begin position="127"/>
        <end position="134"/>
    </location>
</feature>
<feature type="turn" evidence="12">
    <location>
        <begin position="135"/>
        <end position="137"/>
    </location>
</feature>
<reference key="1">
    <citation type="journal article" date="1999" name="Science">
        <title>Genome sequence of the radioresistant bacterium Deinococcus radiodurans R1.</title>
        <authorList>
            <person name="White O."/>
            <person name="Eisen J.A."/>
            <person name="Heidelberg J.F."/>
            <person name="Hickey E.K."/>
            <person name="Peterson J.D."/>
            <person name="Dodson R.J."/>
            <person name="Haft D.H."/>
            <person name="Gwinn M.L."/>
            <person name="Nelson W.C."/>
            <person name="Richardson D.L."/>
            <person name="Moffat K.S."/>
            <person name="Qin H."/>
            <person name="Jiang L."/>
            <person name="Pamphile W."/>
            <person name="Crosby M."/>
            <person name="Shen M."/>
            <person name="Vamathevan J.J."/>
            <person name="Lam P."/>
            <person name="McDonald L.A."/>
            <person name="Utterback T.R."/>
            <person name="Zalewski C."/>
            <person name="Makarova K.S."/>
            <person name="Aravind L."/>
            <person name="Daly M.J."/>
            <person name="Minton K.W."/>
            <person name="Fleischmann R.D."/>
            <person name="Ketchum K.A."/>
            <person name="Nelson K.E."/>
            <person name="Salzberg S.L."/>
            <person name="Smith H.O."/>
            <person name="Venter J.C."/>
            <person name="Fraser C.M."/>
        </authorList>
    </citation>
    <scope>NUCLEOTIDE SEQUENCE [LARGE SCALE GENOMIC DNA]</scope>
    <source>
        <strain>ATCC 13939 / DSM 20539 / JCM 16871 / CCUG 27074 / LMG 4051 / NBRC 15346 / NCIMB 9279 / VKM B-1422 / R1</strain>
    </source>
</reference>
<reference key="2">
    <citation type="journal article" date="2001" name="Cell">
        <title>High resolution structure of the large ribosomal subunit from a mesophilic eubacterium.</title>
        <authorList>
            <person name="Harms J."/>
            <person name="Schluenzen F."/>
            <person name="Zarivach R."/>
            <person name="Bashan A."/>
            <person name="Gat S."/>
            <person name="Agmon I."/>
            <person name="Bartels H."/>
            <person name="Franceschi F."/>
            <person name="Yonath A."/>
        </authorList>
    </citation>
    <scope>X-RAY CRYSTALLOGRAPHY (3.1 ANGSTROMS) OF THE 50S SUBUNIT</scope>
    <scope>PROTEIN SEQUENCE OF 1-5</scope>
    <source>
        <strain>ATCC 13939 / DSM 20539 / JCM 16871 / CCUG 27074 / LMG 4051 / NBRC 15346 / NCIMB 9279 / VKM B-1422 / R1</strain>
    </source>
</reference>
<reference key="3">
    <citation type="journal article" date="2001" name="Nature">
        <title>Structural basis for the interaction of antibiotics with the peptidyl transferase centre in eubacteria.</title>
        <authorList>
            <person name="Schluenzen F."/>
            <person name="Zarivach R."/>
            <person name="Harms J."/>
            <person name="Bashan A."/>
            <person name="Tocilj A."/>
            <person name="Albrecht R."/>
            <person name="Yonath A."/>
            <person name="Franceschi F."/>
        </authorList>
    </citation>
    <scope>X-RAY CRYSTALLOGRAPHY (3.1 ANGSTROMS) OF THE 50S SUBUNIT IN COMPLEX WITH FIVE ANTIBIOTICS</scope>
    <source>
        <strain>ATCC 13939 / DSM 20539 / JCM 16871 / CCUG 27074 / LMG 4051 / NBRC 15346 / NCIMB 9279 / VKM B-1422 / R1</strain>
    </source>
</reference>
<reference key="4">
    <citation type="journal article" date="2003" name="Mol. Cell">
        <title>Structural basis of the ribosomal machinery for peptide bond formation, translocation, and nascent chain progression.</title>
        <authorList>
            <person name="Bashan A."/>
            <person name="Agmon I."/>
            <person name="Zarivach R."/>
            <person name="Schluenzen F."/>
            <person name="Harms J."/>
            <person name="Berisio R."/>
            <person name="Bartels H."/>
            <person name="Franceschi F."/>
            <person name="Auerbach T."/>
            <person name="Hansen H.A."/>
            <person name="Kossoy E."/>
            <person name="Kessler M."/>
            <person name="Yonath A."/>
        </authorList>
    </citation>
    <scope>X-RAY CRYSTALLOGRAPHY (3.5 ANGSTROMS) OF THE 50S SUBUNIT IN COMPLEX WITH TRNA MIMICS</scope>
    <source>
        <strain>ATCC 13939 / DSM 20539 / JCM 16871 / CCUG 27074 / LMG 4051 / NBRC 15346 / NCIMB 9279 / VKM B-1422 / R1</strain>
    </source>
</reference>
<reference key="5">
    <citation type="journal article" date="2003" name="Structure">
        <title>Structural basis for the antibiotic activity of ketolides and azalides.</title>
        <authorList>
            <person name="Schluenzen F."/>
            <person name="Harms J.M."/>
            <person name="Franceschi F."/>
            <person name="Hansen H.A."/>
            <person name="Bartels H."/>
            <person name="Zarivach R."/>
            <person name="Yonath A."/>
        </authorList>
    </citation>
    <scope>X-RAY CRYSTALLOGRAPHY (3.3 ANGSTROMS) OF THE 50S SUBUNIT IN COMPLEX WITH MODIFIED MACROLIDE ANTIBIOTICS</scope>
    <source>
        <strain>ATCC 13939 / DSM 20539 / JCM 16871 / CCUG 27074 / LMG 4051 / NBRC 15346 / NCIMB 9279 / VKM B-1422 / R1</strain>
    </source>
</reference>
<reference key="6">
    <citation type="journal article" date="2003" name="Nat. Struct. Biol.">
        <title>Structural insight into the role of the ribosomal tunnel in cellular regulation.</title>
        <authorList>
            <person name="Berisio R."/>
            <person name="Schluenzen F."/>
            <person name="Harms J."/>
            <person name="Bashan A."/>
            <person name="Auerbach T."/>
            <person name="Baram D."/>
            <person name="Yonath A."/>
        </authorList>
    </citation>
    <scope>X-RAY CRYSTALLOGRAPHY (3.4 ANGSTROMS) OF THE 50S SUBUNIT IN COMPLEX WITH TROLEANDOMYCIN</scope>
    <source>
        <strain>ATCC 13939 / DSM 20539 / JCM 16871 / CCUG 27074 / LMG 4051 / NBRC 15346 / NCIMB 9279 / VKM B-1422 / R1</strain>
    </source>
</reference>
<reference key="7">
    <citation type="journal article" date="2004" name="BMC Biol.">
        <title>Alterations at the peptidyl transferase centre of the ribosome induced by the synergistic action of the streptogramins dalfopristin and quinupristin.</title>
        <authorList>
            <person name="Harms J.M."/>
            <person name="Schluenzen F."/>
            <person name="Fucini P."/>
            <person name="Bartels H."/>
            <person name="Yonath A."/>
        </authorList>
    </citation>
    <scope>X-RAY CRYSTALLOGRAPHY (3.4 ANGSTROMS) OF THE 50S SUBUNIT IN COMPLEX WITH THE STREPTOGRAMINS QUINUPRISTIN AND DALFOPRISTIN</scope>
    <source>
        <strain>ATCC 13939 / DSM 20539 / JCM 16871 / CCUG 27074 / LMG 4051 / NBRC 15346 / NCIMB 9279 / VKM B-1422 / R1</strain>
    </source>
</reference>
<reference key="8">
    <citation type="journal article" date="2004" name="Mol. Microbiol.">
        <title>Inhibition of peptide bond formation by pleuromutilins: the structure of the 50S ribosomal subunit from Deinococcus radiodurans in complex with tiamulin.</title>
        <authorList>
            <person name="Schluenzen F."/>
            <person name="Pyetan E."/>
            <person name="Fucini P."/>
            <person name="Yonath A."/>
            <person name="Harms J.M."/>
        </authorList>
    </citation>
    <scope>X-RAY CRYSTALLOGRAPHY (3.5 ANGSTROMS) OF THE 50S SUBUNIT IN COMPLEX WITH TIAMULIN</scope>
    <source>
        <strain>ATCC 13939 / DSM 20539 / JCM 16871 / CCUG 27074 / LMG 4051 / NBRC 15346 / NCIMB 9279 / VKM B-1422 / R1</strain>
    </source>
</reference>
<proteinExistence type="evidence at protein level"/>